<reference key="1">
    <citation type="submission" date="2004-06" db="EMBL/GenBank/DDBJ databases">
        <authorList>
            <consortium name="NIH - Xenopus Gene Collection (XGC) project"/>
        </authorList>
    </citation>
    <scope>NUCLEOTIDE SEQUENCE [LARGE SCALE MRNA]</scope>
    <source>
        <tissue>Embryo</tissue>
    </source>
</reference>
<organism>
    <name type="scientific">Xenopus tropicalis</name>
    <name type="common">Western clawed frog</name>
    <name type="synonym">Silurana tropicalis</name>
    <dbReference type="NCBI Taxonomy" id="8364"/>
    <lineage>
        <taxon>Eukaryota</taxon>
        <taxon>Metazoa</taxon>
        <taxon>Chordata</taxon>
        <taxon>Craniata</taxon>
        <taxon>Vertebrata</taxon>
        <taxon>Euteleostomi</taxon>
        <taxon>Amphibia</taxon>
        <taxon>Batrachia</taxon>
        <taxon>Anura</taxon>
        <taxon>Pipoidea</taxon>
        <taxon>Pipidae</taxon>
        <taxon>Xenopodinae</taxon>
        <taxon>Xenopus</taxon>
        <taxon>Silurana</taxon>
    </lineage>
</organism>
<proteinExistence type="evidence at transcript level"/>
<feature type="signal peptide" evidence="1">
    <location>
        <begin position="1"/>
        <end position="19"/>
    </location>
</feature>
<feature type="chain" id="PRO_0000312206" description="Glycosyltransferase 1 domain-containing protein 1">
    <location>
        <begin position="20"/>
        <end position="345"/>
    </location>
</feature>
<feature type="glycosylation site" description="N-linked (GlcNAc...) asparagine" evidence="1">
    <location>
        <position position="246"/>
    </location>
</feature>
<feature type="glycosylation site" description="N-linked (GlcNAc...) asparagine" evidence="1">
    <location>
        <position position="322"/>
    </location>
</feature>
<accession>Q6DIQ1</accession>
<sequence>MKILFLACLRAHTGNSTTALRIKDHLEAAGHTCVLKDAAILESSEVETLISQEKFNAGLIIQLYKAGRFLMGNRIPFGAIFGGTDINEDVKNEEKCRVMGAVLEEARFVVAFTHKIKELAATKWPHAKHKIHIQPQGILTKPSKSFDYEAFLQNAGIRHKSGHLHLYVLICGLRRVKDPLYLAEMFAKWHEKEPNVYLAIIGPMVDPVFTKEVENKLEEIDGVYLIKEIPQSDLQAVIKRSFALVNSSLSEGMSAAILEAMDLEVPVLARDIPGNSAIIKHEDTGLLFSTPQEFVQLSKRLMTEPELKRRIVSNAKRYVNSNHSWELERDTYQTLILNLQVNGNI</sequence>
<keyword id="KW-0325">Glycoprotein</keyword>
<keyword id="KW-0328">Glycosyltransferase</keyword>
<keyword id="KW-1185">Reference proteome</keyword>
<keyword id="KW-0964">Secreted</keyword>
<keyword id="KW-0732">Signal</keyword>
<keyword id="KW-0808">Transferase</keyword>
<name>GL1D1_XENTR</name>
<comment type="subcellular location">
    <subcellularLocation>
        <location evidence="2">Secreted</location>
    </subcellularLocation>
</comment>
<comment type="similarity">
    <text evidence="2">Belongs to the glycosyltransferase group 1 family. Glycosyltransferase 4 subfamily.</text>
</comment>
<evidence type="ECO:0000255" key="1"/>
<evidence type="ECO:0000305" key="2"/>
<protein>
    <recommendedName>
        <fullName>Glycosyltransferase 1 domain-containing protein 1</fullName>
        <ecNumber>2.4.-.-</ecNumber>
    </recommendedName>
</protein>
<gene>
    <name type="primary">glt1d1</name>
</gene>
<dbReference type="EC" id="2.4.-.-"/>
<dbReference type="EMBL" id="BC075484">
    <property type="protein sequence ID" value="AAH75484.1"/>
    <property type="molecule type" value="mRNA"/>
</dbReference>
<dbReference type="RefSeq" id="NP_001004969.1">
    <property type="nucleotide sequence ID" value="NM_001004969.1"/>
</dbReference>
<dbReference type="SMR" id="Q6DIQ1"/>
<dbReference type="FunCoup" id="Q6DIQ1">
    <property type="interactions" value="101"/>
</dbReference>
<dbReference type="STRING" id="8364.ENSXETP00000008706"/>
<dbReference type="CAZy" id="GT4">
    <property type="family name" value="Glycosyltransferase Family 4"/>
</dbReference>
<dbReference type="GlyCosmos" id="Q6DIQ1">
    <property type="glycosylation" value="2 sites, No reported glycans"/>
</dbReference>
<dbReference type="PaxDb" id="8364-ENSXETP00000057339"/>
<dbReference type="DNASU" id="448395"/>
<dbReference type="GeneID" id="448395"/>
<dbReference type="KEGG" id="xtr:448395"/>
<dbReference type="AGR" id="Xenbase:XB-GENE-5833313"/>
<dbReference type="CTD" id="144423"/>
<dbReference type="Xenbase" id="XB-GENE-5833313">
    <property type="gene designation" value="glt1d1"/>
</dbReference>
<dbReference type="eggNOG" id="ENOG502QQZE">
    <property type="taxonomic scope" value="Eukaryota"/>
</dbReference>
<dbReference type="InParanoid" id="Q6DIQ1"/>
<dbReference type="OMA" id="FSEWHSE"/>
<dbReference type="OrthoDB" id="512920at2759"/>
<dbReference type="Proteomes" id="UP000008143">
    <property type="component" value="Chromosome 1"/>
</dbReference>
<dbReference type="Bgee" id="ENSXETG00000023741">
    <property type="expression patterns" value="Expressed in egg cell and 11 other cell types or tissues"/>
</dbReference>
<dbReference type="ExpressionAtlas" id="Q6DIQ1">
    <property type="expression patterns" value="differential"/>
</dbReference>
<dbReference type="GO" id="GO:0005576">
    <property type="term" value="C:extracellular region"/>
    <property type="evidence" value="ECO:0007669"/>
    <property type="project" value="UniProtKB-SubCell"/>
</dbReference>
<dbReference type="GO" id="GO:0016757">
    <property type="term" value="F:glycosyltransferase activity"/>
    <property type="evidence" value="ECO:0007669"/>
    <property type="project" value="UniProtKB-KW"/>
</dbReference>
<dbReference type="CDD" id="cd03801">
    <property type="entry name" value="GT4_PimA-like"/>
    <property type="match status" value="1"/>
</dbReference>
<dbReference type="Gene3D" id="3.40.50.2000">
    <property type="entry name" value="Glycogen Phosphorylase B"/>
    <property type="match status" value="2"/>
</dbReference>
<dbReference type="InterPro" id="IPR001296">
    <property type="entry name" value="Glyco_trans_1"/>
</dbReference>
<dbReference type="InterPro" id="IPR052622">
    <property type="entry name" value="Glycosyltransferase_G1"/>
</dbReference>
<dbReference type="PANTHER" id="PTHR46660">
    <property type="match status" value="1"/>
</dbReference>
<dbReference type="PANTHER" id="PTHR46660:SF2">
    <property type="entry name" value="GLYCOSYLTRANSFERASE 1 DOMAIN-CONTAINING PROTEIN 1"/>
    <property type="match status" value="1"/>
</dbReference>
<dbReference type="Pfam" id="PF00534">
    <property type="entry name" value="Glycos_transf_1"/>
    <property type="match status" value="1"/>
</dbReference>
<dbReference type="SUPFAM" id="SSF53756">
    <property type="entry name" value="UDP-Glycosyltransferase/glycogen phosphorylase"/>
    <property type="match status" value="1"/>
</dbReference>